<evidence type="ECO:0000255" key="1">
    <source>
        <dbReference type="HAMAP-Rule" id="MF_00183"/>
    </source>
</evidence>
<gene>
    <name evidence="1" type="primary">dxr</name>
    <name type="ordered locus">Emin_0690</name>
</gene>
<sequence>MKNIVVLGSTGSIGVSSLDVIDKLGAGYGVLALSANTNADLLIKQMLKFKPRFVAVLNEDSYQKVKPYVPENTKLLPPDEDSLIFLASLPSADLIINGLVGAVGFMPLVTAIKNGKTIALANKEPIVMAGKSIMEECYRWKATILPVDSEPSAIFQCLQGTPAGRKEEDISRLLLTASGGPFFKYKGALSRVKPEAALAHPRWVMGKKITIDSATLMNKGFETIEIMHLFNVSLSDIEIVIHPQSIIHSAVEFKDGSILAQLSQPDMRLPIQYAVTYPNRMPSPVKKLTVKDMAKLEFAAPDFKKFPCLELALWSAQKEGAFPAVLSAADEIAVDAYLKEKILFTDIPKLIYSVLKETRSPSGKITISEAAEFDVWAREKAREFLANKKYKKTII</sequence>
<comment type="function">
    <text evidence="1">Catalyzes the NADPH-dependent rearrangement and reduction of 1-deoxy-D-xylulose-5-phosphate (DXP) to 2-C-methyl-D-erythritol 4-phosphate (MEP).</text>
</comment>
<comment type="catalytic activity">
    <reaction evidence="1">
        <text>2-C-methyl-D-erythritol 4-phosphate + NADP(+) = 1-deoxy-D-xylulose 5-phosphate + NADPH + H(+)</text>
        <dbReference type="Rhea" id="RHEA:13717"/>
        <dbReference type="ChEBI" id="CHEBI:15378"/>
        <dbReference type="ChEBI" id="CHEBI:57783"/>
        <dbReference type="ChEBI" id="CHEBI:57792"/>
        <dbReference type="ChEBI" id="CHEBI:58262"/>
        <dbReference type="ChEBI" id="CHEBI:58349"/>
        <dbReference type="EC" id="1.1.1.267"/>
    </reaction>
    <physiologicalReaction direction="right-to-left" evidence="1">
        <dbReference type="Rhea" id="RHEA:13719"/>
    </physiologicalReaction>
</comment>
<comment type="cofactor">
    <cofactor evidence="1">
        <name>Mg(2+)</name>
        <dbReference type="ChEBI" id="CHEBI:18420"/>
    </cofactor>
    <cofactor evidence="1">
        <name>Mn(2+)</name>
        <dbReference type="ChEBI" id="CHEBI:29035"/>
    </cofactor>
</comment>
<comment type="pathway">
    <text evidence="1">Isoprenoid biosynthesis; isopentenyl diphosphate biosynthesis via DXP pathway; isopentenyl diphosphate from 1-deoxy-D-xylulose 5-phosphate: step 1/6.</text>
</comment>
<comment type="similarity">
    <text evidence="1">Belongs to the DXR family.</text>
</comment>
<organism>
    <name type="scientific">Elusimicrobium minutum (strain Pei191)</name>
    <dbReference type="NCBI Taxonomy" id="445932"/>
    <lineage>
        <taxon>Bacteria</taxon>
        <taxon>Pseudomonadati</taxon>
        <taxon>Elusimicrobiota</taxon>
        <taxon>Elusimicrobia</taxon>
        <taxon>Elusimicrobiales</taxon>
        <taxon>Elusimicrobiaceae</taxon>
        <taxon>Elusimicrobium</taxon>
    </lineage>
</organism>
<dbReference type="EC" id="1.1.1.267" evidence="1"/>
<dbReference type="EMBL" id="CP001055">
    <property type="protein sequence ID" value="ACC98245.1"/>
    <property type="molecule type" value="Genomic_DNA"/>
</dbReference>
<dbReference type="RefSeq" id="WP_012414860.1">
    <property type="nucleotide sequence ID" value="NC_010644.1"/>
</dbReference>
<dbReference type="SMR" id="B2KCJ9"/>
<dbReference type="STRING" id="445932.Emin_0690"/>
<dbReference type="KEGG" id="emi:Emin_0690"/>
<dbReference type="HOGENOM" id="CLU_035714_4_0_0"/>
<dbReference type="OrthoDB" id="9806546at2"/>
<dbReference type="UniPathway" id="UPA00056">
    <property type="reaction ID" value="UER00092"/>
</dbReference>
<dbReference type="Proteomes" id="UP000001029">
    <property type="component" value="Chromosome"/>
</dbReference>
<dbReference type="GO" id="GO:0030604">
    <property type="term" value="F:1-deoxy-D-xylulose-5-phosphate reductoisomerase activity"/>
    <property type="evidence" value="ECO:0007669"/>
    <property type="project" value="UniProtKB-UniRule"/>
</dbReference>
<dbReference type="GO" id="GO:0030145">
    <property type="term" value="F:manganese ion binding"/>
    <property type="evidence" value="ECO:0007669"/>
    <property type="project" value="TreeGrafter"/>
</dbReference>
<dbReference type="GO" id="GO:0070402">
    <property type="term" value="F:NADPH binding"/>
    <property type="evidence" value="ECO:0007669"/>
    <property type="project" value="InterPro"/>
</dbReference>
<dbReference type="GO" id="GO:0051484">
    <property type="term" value="P:isopentenyl diphosphate biosynthetic process, methylerythritol 4-phosphate pathway involved in terpenoid biosynthetic process"/>
    <property type="evidence" value="ECO:0007669"/>
    <property type="project" value="TreeGrafter"/>
</dbReference>
<dbReference type="FunFam" id="3.40.50.720:FF:000045">
    <property type="entry name" value="1-deoxy-D-xylulose 5-phosphate reductoisomerase"/>
    <property type="match status" value="1"/>
</dbReference>
<dbReference type="Gene3D" id="1.10.1740.10">
    <property type="match status" value="1"/>
</dbReference>
<dbReference type="Gene3D" id="3.40.50.720">
    <property type="entry name" value="NAD(P)-binding Rossmann-like Domain"/>
    <property type="match status" value="1"/>
</dbReference>
<dbReference type="HAMAP" id="MF_00183">
    <property type="entry name" value="DXP_reductoisom"/>
    <property type="match status" value="1"/>
</dbReference>
<dbReference type="InterPro" id="IPR003821">
    <property type="entry name" value="DXP_reductoisomerase"/>
</dbReference>
<dbReference type="InterPro" id="IPR013644">
    <property type="entry name" value="DXP_reductoisomerase_C"/>
</dbReference>
<dbReference type="InterPro" id="IPR013512">
    <property type="entry name" value="DXP_reductoisomerase_N"/>
</dbReference>
<dbReference type="InterPro" id="IPR026877">
    <property type="entry name" value="DXPR_C"/>
</dbReference>
<dbReference type="InterPro" id="IPR036169">
    <property type="entry name" value="DXPR_C_sf"/>
</dbReference>
<dbReference type="InterPro" id="IPR036291">
    <property type="entry name" value="NAD(P)-bd_dom_sf"/>
</dbReference>
<dbReference type="NCBIfam" id="TIGR00243">
    <property type="entry name" value="Dxr"/>
    <property type="match status" value="1"/>
</dbReference>
<dbReference type="PANTHER" id="PTHR30525">
    <property type="entry name" value="1-DEOXY-D-XYLULOSE 5-PHOSPHATE REDUCTOISOMERASE"/>
    <property type="match status" value="1"/>
</dbReference>
<dbReference type="PANTHER" id="PTHR30525:SF0">
    <property type="entry name" value="1-DEOXY-D-XYLULOSE 5-PHOSPHATE REDUCTOISOMERASE, CHLOROPLASTIC"/>
    <property type="match status" value="1"/>
</dbReference>
<dbReference type="Pfam" id="PF08436">
    <property type="entry name" value="DXP_redisom_C"/>
    <property type="match status" value="1"/>
</dbReference>
<dbReference type="Pfam" id="PF02670">
    <property type="entry name" value="DXP_reductoisom"/>
    <property type="match status" value="1"/>
</dbReference>
<dbReference type="Pfam" id="PF13288">
    <property type="entry name" value="DXPR_C"/>
    <property type="match status" value="1"/>
</dbReference>
<dbReference type="PIRSF" id="PIRSF006205">
    <property type="entry name" value="Dxp_reductismrs"/>
    <property type="match status" value="1"/>
</dbReference>
<dbReference type="SUPFAM" id="SSF69055">
    <property type="entry name" value="1-deoxy-D-xylulose-5-phosphate reductoisomerase, C-terminal domain"/>
    <property type="match status" value="1"/>
</dbReference>
<dbReference type="SUPFAM" id="SSF55347">
    <property type="entry name" value="Glyceraldehyde-3-phosphate dehydrogenase-like, C-terminal domain"/>
    <property type="match status" value="1"/>
</dbReference>
<dbReference type="SUPFAM" id="SSF51735">
    <property type="entry name" value="NAD(P)-binding Rossmann-fold domains"/>
    <property type="match status" value="1"/>
</dbReference>
<keyword id="KW-0414">Isoprene biosynthesis</keyword>
<keyword id="KW-0464">Manganese</keyword>
<keyword id="KW-0479">Metal-binding</keyword>
<keyword id="KW-0521">NADP</keyword>
<keyword id="KW-0560">Oxidoreductase</keyword>
<keyword id="KW-1185">Reference proteome</keyword>
<reference key="1">
    <citation type="journal article" date="2009" name="Appl. Environ. Microbiol.">
        <title>Genomic analysis of 'Elusimicrobium minutum,' the first cultivated representative of the phylum 'Elusimicrobia' (formerly termite group 1).</title>
        <authorList>
            <person name="Herlemann D.P.R."/>
            <person name="Geissinger O."/>
            <person name="Ikeda-Ohtsubo W."/>
            <person name="Kunin V."/>
            <person name="Sun H."/>
            <person name="Lapidus A."/>
            <person name="Hugenholtz P."/>
            <person name="Brune A."/>
        </authorList>
    </citation>
    <scope>NUCLEOTIDE SEQUENCE [LARGE SCALE GENOMIC DNA]</scope>
    <source>
        <strain>Pei191</strain>
    </source>
</reference>
<feature type="chain" id="PRO_1000098493" description="1-deoxy-D-xylulose 5-phosphate reductoisomerase">
    <location>
        <begin position="1"/>
        <end position="395"/>
    </location>
</feature>
<feature type="binding site" evidence="1">
    <location>
        <position position="10"/>
    </location>
    <ligand>
        <name>NADPH</name>
        <dbReference type="ChEBI" id="CHEBI:57783"/>
    </ligand>
</feature>
<feature type="binding site" evidence="1">
    <location>
        <position position="11"/>
    </location>
    <ligand>
        <name>NADPH</name>
        <dbReference type="ChEBI" id="CHEBI:57783"/>
    </ligand>
</feature>
<feature type="binding site" evidence="1">
    <location>
        <position position="12"/>
    </location>
    <ligand>
        <name>NADPH</name>
        <dbReference type="ChEBI" id="CHEBI:57783"/>
    </ligand>
</feature>
<feature type="binding site" evidence="1">
    <location>
        <position position="13"/>
    </location>
    <ligand>
        <name>NADPH</name>
        <dbReference type="ChEBI" id="CHEBI:57783"/>
    </ligand>
</feature>
<feature type="binding site" evidence="1">
    <location>
        <position position="38"/>
    </location>
    <ligand>
        <name>NADPH</name>
        <dbReference type="ChEBI" id="CHEBI:57783"/>
    </ligand>
</feature>
<feature type="binding site" evidence="1">
    <location>
        <position position="122"/>
    </location>
    <ligand>
        <name>NADPH</name>
        <dbReference type="ChEBI" id="CHEBI:57783"/>
    </ligand>
</feature>
<feature type="binding site" evidence="1">
    <location>
        <position position="123"/>
    </location>
    <ligand>
        <name>1-deoxy-D-xylulose 5-phosphate</name>
        <dbReference type="ChEBI" id="CHEBI:57792"/>
    </ligand>
</feature>
<feature type="binding site" evidence="1">
    <location>
        <position position="124"/>
    </location>
    <ligand>
        <name>NADPH</name>
        <dbReference type="ChEBI" id="CHEBI:57783"/>
    </ligand>
</feature>
<feature type="binding site" evidence="1">
    <location>
        <position position="148"/>
    </location>
    <ligand>
        <name>Mn(2+)</name>
        <dbReference type="ChEBI" id="CHEBI:29035"/>
    </ligand>
</feature>
<feature type="binding site" evidence="1">
    <location>
        <position position="149"/>
    </location>
    <ligand>
        <name>1-deoxy-D-xylulose 5-phosphate</name>
        <dbReference type="ChEBI" id="CHEBI:57792"/>
    </ligand>
</feature>
<feature type="binding site" evidence="1">
    <location>
        <position position="150"/>
    </location>
    <ligand>
        <name>1-deoxy-D-xylulose 5-phosphate</name>
        <dbReference type="ChEBI" id="CHEBI:57792"/>
    </ligand>
</feature>
<feature type="binding site" evidence="1">
    <location>
        <position position="150"/>
    </location>
    <ligand>
        <name>Mn(2+)</name>
        <dbReference type="ChEBI" id="CHEBI:29035"/>
    </ligand>
</feature>
<feature type="binding site" evidence="1">
    <location>
        <position position="178"/>
    </location>
    <ligand>
        <name>1-deoxy-D-xylulose 5-phosphate</name>
        <dbReference type="ChEBI" id="CHEBI:57792"/>
    </ligand>
</feature>
<feature type="binding site" evidence="1">
    <location>
        <position position="200"/>
    </location>
    <ligand>
        <name>1-deoxy-D-xylulose 5-phosphate</name>
        <dbReference type="ChEBI" id="CHEBI:57792"/>
    </ligand>
</feature>
<feature type="binding site" evidence="1">
    <location>
        <position position="206"/>
    </location>
    <ligand>
        <name>NADPH</name>
        <dbReference type="ChEBI" id="CHEBI:57783"/>
    </ligand>
</feature>
<feature type="binding site" evidence="1">
    <location>
        <position position="213"/>
    </location>
    <ligand>
        <name>1-deoxy-D-xylulose 5-phosphate</name>
        <dbReference type="ChEBI" id="CHEBI:57792"/>
    </ligand>
</feature>
<feature type="binding site" evidence="1">
    <location>
        <position position="218"/>
    </location>
    <ligand>
        <name>1-deoxy-D-xylulose 5-phosphate</name>
        <dbReference type="ChEBI" id="CHEBI:57792"/>
    </ligand>
</feature>
<feature type="binding site" evidence="1">
    <location>
        <position position="219"/>
    </location>
    <ligand>
        <name>1-deoxy-D-xylulose 5-phosphate</name>
        <dbReference type="ChEBI" id="CHEBI:57792"/>
    </ligand>
</feature>
<feature type="binding site" evidence="1">
    <location>
        <position position="222"/>
    </location>
    <ligand>
        <name>1-deoxy-D-xylulose 5-phosphate</name>
        <dbReference type="ChEBI" id="CHEBI:57792"/>
    </ligand>
</feature>
<feature type="binding site" evidence="1">
    <location>
        <position position="222"/>
    </location>
    <ligand>
        <name>Mn(2+)</name>
        <dbReference type="ChEBI" id="CHEBI:29035"/>
    </ligand>
</feature>
<name>DXR_ELUMP</name>
<proteinExistence type="inferred from homology"/>
<protein>
    <recommendedName>
        <fullName evidence="1">1-deoxy-D-xylulose 5-phosphate reductoisomerase</fullName>
        <shortName evidence="1">DXP reductoisomerase</shortName>
        <ecNumber evidence="1">1.1.1.267</ecNumber>
    </recommendedName>
    <alternativeName>
        <fullName evidence="1">1-deoxyxylulose-5-phosphate reductoisomerase</fullName>
    </alternativeName>
    <alternativeName>
        <fullName evidence="1">2-C-methyl-D-erythritol 4-phosphate synthase</fullName>
    </alternativeName>
</protein>
<accession>B2KCJ9</accession>